<keyword id="KW-0067">ATP-binding</keyword>
<keyword id="KW-0143">Chaperone</keyword>
<keyword id="KW-0342">GTP-binding</keyword>
<keyword id="KW-0378">Hydrolase</keyword>
<keyword id="KW-0496">Mitochondrion</keyword>
<keyword id="KW-0547">Nucleotide-binding</keyword>
<keyword id="KW-1185">Reference proteome</keyword>
<keyword id="KW-0809">Transit peptide</keyword>
<evidence type="ECO:0000250" key="1"/>
<evidence type="ECO:0000305" key="2"/>
<evidence type="ECO:0000312" key="3">
    <source>
        <dbReference type="EMBL" id="CAP31923.2"/>
    </source>
</evidence>
<dbReference type="EC" id="3.6.-.-"/>
<dbReference type="EMBL" id="HE601401">
    <property type="protein sequence ID" value="CAP31923.2"/>
    <property type="molecule type" value="Genomic_DNA"/>
</dbReference>
<dbReference type="SMR" id="A8XGZ9"/>
<dbReference type="FunCoup" id="A8XGZ9">
    <property type="interactions" value="280"/>
</dbReference>
<dbReference type="STRING" id="6238.A8XGZ9"/>
<dbReference type="WormBase" id="CBG13064">
    <property type="protein sequence ID" value="CBP40019"/>
    <property type="gene ID" value="WBGene00033893"/>
    <property type="gene designation" value="Cbr-mmaa-1"/>
</dbReference>
<dbReference type="eggNOG" id="ENOG502QR2W">
    <property type="taxonomic scope" value="Eukaryota"/>
</dbReference>
<dbReference type="HOGENOM" id="CLU_043725_2_2_1"/>
<dbReference type="InParanoid" id="A8XGZ9"/>
<dbReference type="OMA" id="WMWERID"/>
<dbReference type="Proteomes" id="UP000008549">
    <property type="component" value="Unassembled WGS sequence"/>
</dbReference>
<dbReference type="GO" id="GO:0005737">
    <property type="term" value="C:cytoplasm"/>
    <property type="evidence" value="ECO:0000318"/>
    <property type="project" value="GO_Central"/>
</dbReference>
<dbReference type="GO" id="GO:0005739">
    <property type="term" value="C:mitochondrion"/>
    <property type="evidence" value="ECO:0007669"/>
    <property type="project" value="UniProtKB-SubCell"/>
</dbReference>
<dbReference type="GO" id="GO:0005524">
    <property type="term" value="F:ATP binding"/>
    <property type="evidence" value="ECO:0007669"/>
    <property type="project" value="UniProtKB-KW"/>
</dbReference>
<dbReference type="GO" id="GO:0005525">
    <property type="term" value="F:GTP binding"/>
    <property type="evidence" value="ECO:0007669"/>
    <property type="project" value="UniProtKB-KW"/>
</dbReference>
<dbReference type="GO" id="GO:0003924">
    <property type="term" value="F:GTPase activity"/>
    <property type="evidence" value="ECO:0000318"/>
    <property type="project" value="GO_Central"/>
</dbReference>
<dbReference type="CDD" id="cd03114">
    <property type="entry name" value="MMAA-like"/>
    <property type="match status" value="1"/>
</dbReference>
<dbReference type="Gene3D" id="1.10.287.130">
    <property type="match status" value="1"/>
</dbReference>
<dbReference type="Gene3D" id="1.20.5.170">
    <property type="match status" value="1"/>
</dbReference>
<dbReference type="Gene3D" id="3.40.50.300">
    <property type="entry name" value="P-loop containing nucleotide triphosphate hydrolases"/>
    <property type="match status" value="1"/>
</dbReference>
<dbReference type="InterPro" id="IPR005129">
    <property type="entry name" value="GTPase_ArgK"/>
</dbReference>
<dbReference type="InterPro" id="IPR027417">
    <property type="entry name" value="P-loop_NTPase"/>
</dbReference>
<dbReference type="NCBIfam" id="TIGR00750">
    <property type="entry name" value="lao"/>
    <property type="match status" value="1"/>
</dbReference>
<dbReference type="NCBIfam" id="NF006958">
    <property type="entry name" value="PRK09435.1"/>
    <property type="match status" value="1"/>
</dbReference>
<dbReference type="PANTHER" id="PTHR23408:SF3">
    <property type="entry name" value="METHYLMALONIC ACIDURIA TYPE A PROTEIN, MITOCHONDRIAL"/>
    <property type="match status" value="1"/>
</dbReference>
<dbReference type="PANTHER" id="PTHR23408">
    <property type="entry name" value="METHYLMALONYL-COA MUTASE"/>
    <property type="match status" value="1"/>
</dbReference>
<dbReference type="Pfam" id="PF03308">
    <property type="entry name" value="MeaB"/>
    <property type="match status" value="1"/>
</dbReference>
<dbReference type="SUPFAM" id="SSF52540">
    <property type="entry name" value="P-loop containing nucleoside triphosphate hydrolases"/>
    <property type="match status" value="1"/>
</dbReference>
<proteinExistence type="inferred from homology"/>
<name>MMAA1_CAEBR</name>
<accession>A8XGZ9</accession>
<organism>
    <name type="scientific">Caenorhabditis briggsae</name>
    <dbReference type="NCBI Taxonomy" id="6238"/>
    <lineage>
        <taxon>Eukaryota</taxon>
        <taxon>Metazoa</taxon>
        <taxon>Ecdysozoa</taxon>
        <taxon>Nematoda</taxon>
        <taxon>Chromadorea</taxon>
        <taxon>Rhabditida</taxon>
        <taxon>Rhabditina</taxon>
        <taxon>Rhabditomorpha</taxon>
        <taxon>Rhabditoidea</taxon>
        <taxon>Rhabditidae</taxon>
        <taxon>Peloderinae</taxon>
        <taxon>Caenorhabditis</taxon>
    </lineage>
</organism>
<gene>
    <name evidence="3" type="primary">mmaa-1</name>
    <name type="ORF">CBG13064</name>
</gene>
<protein>
    <recommendedName>
        <fullName>Methylmalonic aciduria type A homolog, mitochondrial</fullName>
        <ecNumber>3.6.-.-</ecNumber>
    </recommendedName>
    <alternativeName>
        <fullName>Methylmalonic aciduria type A protein 1</fullName>
    </alternativeName>
</protein>
<reference evidence="3" key="1">
    <citation type="journal article" date="2003" name="PLoS Biol.">
        <title>The genome sequence of Caenorhabditis briggsae: a platform for comparative genomics.</title>
        <authorList>
            <person name="Stein L.D."/>
            <person name="Bao Z."/>
            <person name="Blasiar D."/>
            <person name="Blumenthal T."/>
            <person name="Brent M.R."/>
            <person name="Chen N."/>
            <person name="Chinwalla A."/>
            <person name="Clarke L."/>
            <person name="Clee C."/>
            <person name="Coghlan A."/>
            <person name="Coulson A."/>
            <person name="D'Eustachio P."/>
            <person name="Fitch D.H.A."/>
            <person name="Fulton L.A."/>
            <person name="Fulton R.E."/>
            <person name="Griffiths-Jones S."/>
            <person name="Harris T.W."/>
            <person name="Hillier L.W."/>
            <person name="Kamath R."/>
            <person name="Kuwabara P.E."/>
            <person name="Mardis E.R."/>
            <person name="Marra M.A."/>
            <person name="Miner T.L."/>
            <person name="Minx P."/>
            <person name="Mullikin J.C."/>
            <person name="Plumb R.W."/>
            <person name="Rogers J."/>
            <person name="Schein J.E."/>
            <person name="Sohrmann M."/>
            <person name="Spieth J."/>
            <person name="Stajich J.E."/>
            <person name="Wei C."/>
            <person name="Willey D."/>
            <person name="Wilson R.K."/>
            <person name="Durbin R.M."/>
            <person name="Waterston R.H."/>
        </authorList>
    </citation>
    <scope>NUCLEOTIDE SEQUENCE [LARGE SCALE GENOMIC DNA]</scope>
    <source>
        <strain evidence="3">AF16</strain>
    </source>
</reference>
<sequence length="412" mass="45794">MVVRALVRAHPLSRISCRYSSLAASSFNPKPYIPSVSGVQKSLPFDNLLEQYSRVHWDDTVTYDDPTVQRLFKNLMSGSRAALASAITLVESRHPTKRAQGNMLLKMVLDEEREKYKKYGRDSMIFRVGISGSPGVGKSSFIEALGAELTENRGKKVAVLTIDPTSAMTGGSVLGDLTRMQELSRNPRAYIRQSPTSGSLGGVTRGIHEAVILCEGAGYDIVIIETVGVGQSETSVSDMCDMMCLLLSPAHGDELQGVKRGIMEMSDLLVVTKDDGDLQAKAKMTQAEYISALKFMRPRLDVWSPKVMRSSIMNKESVSAVCTSLYEFWDTIGESGDLERRRQDQMKKWMWNHVKDEIMAVFQKHPKIIHLKNHKIFINLLLQAPKLEKDISSGKITPGLAAETMIRTFFGV</sequence>
<feature type="transit peptide" description="Mitochondrion" evidence="2">
    <location>
        <begin position="1"/>
        <end position="15"/>
    </location>
</feature>
<feature type="chain" id="PRO_0000395431" description="Methylmalonic aciduria type A homolog, mitochondrial">
    <location>
        <begin position="16"/>
        <end position="412"/>
    </location>
</feature>
<feature type="binding site" evidence="1">
    <location>
        <begin position="132"/>
        <end position="140"/>
    </location>
    <ligand>
        <name>GTP</name>
        <dbReference type="ChEBI" id="CHEBI:37565"/>
    </ligand>
</feature>
<feature type="binding site" evidence="1">
    <location>
        <position position="275"/>
    </location>
    <ligand>
        <name>GTP</name>
        <dbReference type="ChEBI" id="CHEBI:37565"/>
    </ligand>
</feature>
<feature type="binding site" evidence="1">
    <location>
        <begin position="311"/>
        <end position="313"/>
    </location>
    <ligand>
        <name>GTP</name>
        <dbReference type="ChEBI" id="CHEBI:37565"/>
    </ligand>
</feature>
<comment type="function">
    <text evidence="1">May have GTPase activity. May also bind and hydrolyze ATP. May function as chaperone. Likely to have a role in propionyl-CoA metabolism and adenosylcobalamin synthesis (By similarity).</text>
</comment>
<comment type="subcellular location">
    <subcellularLocation>
        <location evidence="2">Mitochondrion</location>
    </subcellularLocation>
</comment>
<comment type="similarity">
    <text evidence="2">Belongs to the SIMIBI class G3E GTPase family. ArgK/MeaB subfamily.</text>
</comment>